<reference key="1">
    <citation type="journal article" date="2008" name="PLoS ONE">
        <title>An optimized chloroplast DNA extraction protocol for grasses (Poaceae) proves suitable for whole plastid genome sequencing and SNP detection.</title>
        <authorList>
            <person name="Diekmann K."/>
            <person name="Hodkinson T.R."/>
            <person name="Fricke E."/>
            <person name="Barth S."/>
        </authorList>
    </citation>
    <scope>NUCLEOTIDE SEQUENCE [LARGE SCALE GENOMIC DNA]</scope>
    <source>
        <strain>cv. Cashel</strain>
    </source>
</reference>
<feature type="chain" id="PRO_0000343291" description="NAD(P)H-quinone oxidoreductase chain 4, chloroplastic">
    <location>
        <begin position="1"/>
        <end position="502"/>
    </location>
</feature>
<feature type="transmembrane region" description="Helical" evidence="1">
    <location>
        <begin position="4"/>
        <end position="24"/>
    </location>
</feature>
<feature type="transmembrane region" description="Helical" evidence="1">
    <location>
        <begin position="37"/>
        <end position="57"/>
    </location>
</feature>
<feature type="transmembrane region" description="Helical" evidence="1">
    <location>
        <begin position="87"/>
        <end position="107"/>
    </location>
</feature>
<feature type="transmembrane region" description="Helical" evidence="1">
    <location>
        <begin position="113"/>
        <end position="130"/>
    </location>
</feature>
<feature type="transmembrane region" description="Helical" evidence="1">
    <location>
        <begin position="134"/>
        <end position="154"/>
    </location>
</feature>
<feature type="transmembrane region" description="Helical" evidence="1">
    <location>
        <begin position="167"/>
        <end position="187"/>
    </location>
</feature>
<feature type="transmembrane region" description="Helical" evidence="1">
    <location>
        <begin position="213"/>
        <end position="233"/>
    </location>
</feature>
<feature type="transmembrane region" description="Helical" evidence="1">
    <location>
        <begin position="244"/>
        <end position="264"/>
    </location>
</feature>
<feature type="transmembrane region" description="Helical" evidence="1">
    <location>
        <begin position="274"/>
        <end position="294"/>
    </location>
</feature>
<feature type="transmembrane region" description="Helical" evidence="1">
    <location>
        <begin position="315"/>
        <end position="335"/>
    </location>
</feature>
<feature type="transmembrane region" description="Helical" evidence="1">
    <location>
        <begin position="336"/>
        <end position="356"/>
    </location>
</feature>
<feature type="transmembrane region" description="Helical" evidence="1">
    <location>
        <begin position="388"/>
        <end position="408"/>
    </location>
</feature>
<feature type="transmembrane region" description="Helical" evidence="1">
    <location>
        <begin position="419"/>
        <end position="439"/>
    </location>
</feature>
<feature type="transmembrane region" description="Helical" evidence="1">
    <location>
        <begin position="464"/>
        <end position="484"/>
    </location>
</feature>
<protein>
    <recommendedName>
        <fullName evidence="1">NAD(P)H-quinone oxidoreductase chain 4, chloroplastic</fullName>
        <ecNumber evidence="1">7.1.1.-</ecNumber>
    </recommendedName>
    <alternativeName>
        <fullName evidence="1">NAD(P)H dehydrogenase, chain 4</fullName>
    </alternativeName>
    <alternativeName>
        <fullName evidence="1">NADH-plastoquinone oxidoreductase chain 4</fullName>
    </alternativeName>
</protein>
<evidence type="ECO:0000255" key="1">
    <source>
        <dbReference type="HAMAP-Rule" id="MF_00491"/>
    </source>
</evidence>
<dbReference type="EC" id="7.1.1.-" evidence="1"/>
<dbReference type="EMBL" id="AM777385">
    <property type="protein sequence ID" value="CAO86026.1"/>
    <property type="molecule type" value="Genomic_DNA"/>
</dbReference>
<dbReference type="RefSeq" id="YP_001531332.1">
    <property type="nucleotide sequence ID" value="NC_009950.1"/>
</dbReference>
<dbReference type="SMR" id="A8Y9D7"/>
<dbReference type="GeneID" id="5696593"/>
<dbReference type="KEGG" id="lper:5696593"/>
<dbReference type="OrthoDB" id="622985at2759"/>
<dbReference type="GO" id="GO:0009535">
    <property type="term" value="C:chloroplast thylakoid membrane"/>
    <property type="evidence" value="ECO:0007669"/>
    <property type="project" value="UniProtKB-SubCell"/>
</dbReference>
<dbReference type="GO" id="GO:0008137">
    <property type="term" value="F:NADH dehydrogenase (ubiquinone) activity"/>
    <property type="evidence" value="ECO:0007669"/>
    <property type="project" value="InterPro"/>
</dbReference>
<dbReference type="GO" id="GO:0048039">
    <property type="term" value="F:ubiquinone binding"/>
    <property type="evidence" value="ECO:0007669"/>
    <property type="project" value="TreeGrafter"/>
</dbReference>
<dbReference type="GO" id="GO:0042773">
    <property type="term" value="P:ATP synthesis coupled electron transport"/>
    <property type="evidence" value="ECO:0007669"/>
    <property type="project" value="InterPro"/>
</dbReference>
<dbReference type="GO" id="GO:0015990">
    <property type="term" value="P:electron transport coupled proton transport"/>
    <property type="evidence" value="ECO:0007669"/>
    <property type="project" value="TreeGrafter"/>
</dbReference>
<dbReference type="HAMAP" id="MF_00491">
    <property type="entry name" value="NDH1_NuoM"/>
    <property type="match status" value="1"/>
</dbReference>
<dbReference type="InterPro" id="IPR022997">
    <property type="entry name" value="NADH_Q_OxRdtase_chain4"/>
</dbReference>
<dbReference type="InterPro" id="IPR010227">
    <property type="entry name" value="NADH_Q_OxRdtase_chainM/4"/>
</dbReference>
<dbReference type="InterPro" id="IPR003918">
    <property type="entry name" value="NADH_UbQ_OxRdtase"/>
</dbReference>
<dbReference type="InterPro" id="IPR001750">
    <property type="entry name" value="ND/Mrp_TM"/>
</dbReference>
<dbReference type="NCBIfam" id="TIGR01972">
    <property type="entry name" value="NDH_I_M"/>
    <property type="match status" value="1"/>
</dbReference>
<dbReference type="PANTHER" id="PTHR43507:SF21">
    <property type="entry name" value="NAD(P)H-QUINONE OXIDOREDUCTASE CHAIN 4, CHLOROPLASTIC"/>
    <property type="match status" value="1"/>
</dbReference>
<dbReference type="PANTHER" id="PTHR43507">
    <property type="entry name" value="NADH-UBIQUINONE OXIDOREDUCTASE CHAIN 4"/>
    <property type="match status" value="1"/>
</dbReference>
<dbReference type="Pfam" id="PF00361">
    <property type="entry name" value="Proton_antipo_M"/>
    <property type="match status" value="1"/>
</dbReference>
<dbReference type="PRINTS" id="PR01437">
    <property type="entry name" value="NUOXDRDTASE4"/>
</dbReference>
<proteinExistence type="inferred from homology"/>
<keyword id="KW-0150">Chloroplast</keyword>
<keyword id="KW-0472">Membrane</keyword>
<keyword id="KW-0520">NAD</keyword>
<keyword id="KW-0521">NADP</keyword>
<keyword id="KW-0934">Plastid</keyword>
<keyword id="KW-0618">Plastoquinone</keyword>
<keyword id="KW-0874">Quinone</keyword>
<keyword id="KW-0793">Thylakoid</keyword>
<keyword id="KW-1278">Translocase</keyword>
<keyword id="KW-0812">Transmembrane</keyword>
<keyword id="KW-1133">Transmembrane helix</keyword>
<geneLocation type="chloroplast"/>
<accession>A8Y9D7</accession>
<gene>
    <name evidence="1" type="primary">ndhD</name>
    <name type="ordered locus">LopeCp106</name>
</gene>
<comment type="catalytic activity">
    <reaction evidence="1">
        <text>a plastoquinone + NADH + (n+1) H(+)(in) = a plastoquinol + NAD(+) + n H(+)(out)</text>
        <dbReference type="Rhea" id="RHEA:42608"/>
        <dbReference type="Rhea" id="RHEA-COMP:9561"/>
        <dbReference type="Rhea" id="RHEA-COMP:9562"/>
        <dbReference type="ChEBI" id="CHEBI:15378"/>
        <dbReference type="ChEBI" id="CHEBI:17757"/>
        <dbReference type="ChEBI" id="CHEBI:57540"/>
        <dbReference type="ChEBI" id="CHEBI:57945"/>
        <dbReference type="ChEBI" id="CHEBI:62192"/>
    </reaction>
</comment>
<comment type="catalytic activity">
    <reaction evidence="1">
        <text>a plastoquinone + NADPH + (n+1) H(+)(in) = a plastoquinol + NADP(+) + n H(+)(out)</text>
        <dbReference type="Rhea" id="RHEA:42612"/>
        <dbReference type="Rhea" id="RHEA-COMP:9561"/>
        <dbReference type="Rhea" id="RHEA-COMP:9562"/>
        <dbReference type="ChEBI" id="CHEBI:15378"/>
        <dbReference type="ChEBI" id="CHEBI:17757"/>
        <dbReference type="ChEBI" id="CHEBI:57783"/>
        <dbReference type="ChEBI" id="CHEBI:58349"/>
        <dbReference type="ChEBI" id="CHEBI:62192"/>
    </reaction>
</comment>
<comment type="subcellular location">
    <subcellularLocation>
        <location evidence="1">Plastid</location>
        <location evidence="1">Chloroplast thylakoid membrane</location>
        <topology evidence="1">Multi-pass membrane protein</topology>
    </subcellularLocation>
</comment>
<comment type="similarity">
    <text evidence="1">Belongs to the complex I subunit 4 family.</text>
</comment>
<name>NU4C_LOLPR</name>
<sequence length="502" mass="56652">MSYFPWLTILVVLPIFAGSLIFFLPHRGNKIVRWYTISICLLEFLLMTYAFCYHFQLEDPLIQLKEDYKWIDIFDFHWRLGIDGLSLGSILLTGFITTLATLAAWPVTRNSRLFYFLMLAMYSGQIGLFSSRDLLLFFIMWELELIPVYLLLSMWGGKRRLYSATKFILYTAGGSIFFLIGVLGMGLYGYGSNELGLDLERLINQSYPATLEILLYFGFLIAYAVKLPIIPLHTWLPDTHGEAHYSTCMLLAGILLKMGAYGLIRINMELLPHAHYLFSPWLVIIGAIQIIYAASTSLGQRNFKKRIAYSSISHMGFIIIGIGSITNIGLNGAILQILSHGFIGATLFFLAGTASDRMRLVYLEELGGISIPMPKIFTMFSSFSMASLALPGMSGFVAELVVFFGLITSPKFLLMPKMLITFVMAIGMILTPIYLLSMLRQMFYGYKLFNVPNANFVDSGPRELFILICIFLPVIGIGIYPDFVLSLSIDRVEALVSNYYPK</sequence>
<organism>
    <name type="scientific">Lolium perenne</name>
    <name type="common">Perennial ryegrass</name>
    <dbReference type="NCBI Taxonomy" id="4522"/>
    <lineage>
        <taxon>Eukaryota</taxon>
        <taxon>Viridiplantae</taxon>
        <taxon>Streptophyta</taxon>
        <taxon>Embryophyta</taxon>
        <taxon>Tracheophyta</taxon>
        <taxon>Spermatophyta</taxon>
        <taxon>Magnoliopsida</taxon>
        <taxon>Liliopsida</taxon>
        <taxon>Poales</taxon>
        <taxon>Poaceae</taxon>
        <taxon>BOP clade</taxon>
        <taxon>Pooideae</taxon>
        <taxon>Poodae</taxon>
        <taxon>Poeae</taxon>
        <taxon>Poeae Chloroplast Group 2 (Poeae type)</taxon>
        <taxon>Loliodinae</taxon>
        <taxon>Loliinae</taxon>
        <taxon>Lolium</taxon>
    </lineage>
</organism>